<feature type="chain" id="PRO_1000196978" description="Sugar fermentation stimulation protein homolog">
    <location>
        <begin position="1"/>
        <end position="222"/>
    </location>
</feature>
<evidence type="ECO:0000255" key="1">
    <source>
        <dbReference type="HAMAP-Rule" id="MF_00095"/>
    </source>
</evidence>
<name>SFSA_THENN</name>
<dbReference type="EMBL" id="CP000916">
    <property type="protein sequence ID" value="ACM22276.1"/>
    <property type="molecule type" value="Genomic_DNA"/>
</dbReference>
<dbReference type="RefSeq" id="WP_012644986.1">
    <property type="nucleotide sequence ID" value="NC_011978.1"/>
</dbReference>
<dbReference type="SMR" id="B9KB80"/>
<dbReference type="STRING" id="309803.CTN_0100"/>
<dbReference type="KEGG" id="tna:CTN_0100"/>
<dbReference type="eggNOG" id="COG1489">
    <property type="taxonomic scope" value="Bacteria"/>
</dbReference>
<dbReference type="HOGENOM" id="CLU_052299_1_0_0"/>
<dbReference type="Proteomes" id="UP000000445">
    <property type="component" value="Chromosome"/>
</dbReference>
<dbReference type="GO" id="GO:0003677">
    <property type="term" value="F:DNA binding"/>
    <property type="evidence" value="ECO:0007669"/>
    <property type="project" value="InterPro"/>
</dbReference>
<dbReference type="CDD" id="cd22357">
    <property type="entry name" value="SfsA-like"/>
    <property type="match status" value="1"/>
</dbReference>
<dbReference type="Gene3D" id="2.40.50.580">
    <property type="match status" value="1"/>
</dbReference>
<dbReference type="Gene3D" id="3.40.1350.60">
    <property type="match status" value="1"/>
</dbReference>
<dbReference type="HAMAP" id="MF_00095">
    <property type="entry name" value="SfsA"/>
    <property type="match status" value="1"/>
</dbReference>
<dbReference type="InterPro" id="IPR005224">
    <property type="entry name" value="SfsA"/>
</dbReference>
<dbReference type="InterPro" id="IPR040452">
    <property type="entry name" value="SfsA_C"/>
</dbReference>
<dbReference type="InterPro" id="IPR041465">
    <property type="entry name" value="SfsA_N"/>
</dbReference>
<dbReference type="NCBIfam" id="TIGR00230">
    <property type="entry name" value="sfsA"/>
    <property type="match status" value="1"/>
</dbReference>
<dbReference type="PANTHER" id="PTHR30545">
    <property type="entry name" value="SUGAR FERMENTATION STIMULATION PROTEIN A"/>
    <property type="match status" value="1"/>
</dbReference>
<dbReference type="PANTHER" id="PTHR30545:SF2">
    <property type="entry name" value="SUGAR FERMENTATION STIMULATION PROTEIN A"/>
    <property type="match status" value="1"/>
</dbReference>
<dbReference type="Pfam" id="PF03749">
    <property type="entry name" value="SfsA"/>
    <property type="match status" value="1"/>
</dbReference>
<dbReference type="Pfam" id="PF17746">
    <property type="entry name" value="SfsA_N"/>
    <property type="match status" value="1"/>
</dbReference>
<sequence length="222" mass="25522">MKLEIPFDEEGIFLERKTRFTGIVSVGKERTQAHIHNTGRLPLLSPGKRVLLKRAKSERRKTKWDLLAVEYREEFVFVHSGYHSLVAERILGEMFPGARIEREKTSGNSVLDFLVDGKTFVEVKGCTFEENGVAMFPDAPTVRGKRHVEELIRCVESGFRALLLILVFLESRCFLPNRKVDPFFSEIFWHALSKGVDVCVFRLKYDGEYLHSMGNLPICEEV</sequence>
<accession>B9KB80</accession>
<reference key="1">
    <citation type="submission" date="2007-11" db="EMBL/GenBank/DDBJ databases">
        <title>The genome sequence of the hyperthermophilic bacterium Thermotoga neapolitana.</title>
        <authorList>
            <person name="Lim S.K."/>
            <person name="Kim J.S."/>
            <person name="Cha S.H."/>
            <person name="Park B.C."/>
            <person name="Lee D.S."/>
            <person name="Tae H.S."/>
            <person name="Kim S.-J."/>
            <person name="Kim J.J."/>
            <person name="Park K.J."/>
            <person name="Lee S.Y."/>
        </authorList>
    </citation>
    <scope>NUCLEOTIDE SEQUENCE [LARGE SCALE GENOMIC DNA]</scope>
    <source>
        <strain>ATCC 49049 / DSM 4359 / NBRC 107923 / NS-E</strain>
    </source>
</reference>
<proteinExistence type="inferred from homology"/>
<protein>
    <recommendedName>
        <fullName evidence="1">Sugar fermentation stimulation protein homolog</fullName>
    </recommendedName>
</protein>
<gene>
    <name evidence="1" type="primary">sfsA</name>
    <name type="ordered locus">CTN_0100</name>
</gene>
<comment type="similarity">
    <text evidence="1">Belongs to the SfsA family.</text>
</comment>
<organism>
    <name type="scientific">Thermotoga neapolitana (strain ATCC 49049 / DSM 4359 / NBRC 107923 / NS-E)</name>
    <dbReference type="NCBI Taxonomy" id="309803"/>
    <lineage>
        <taxon>Bacteria</taxon>
        <taxon>Thermotogati</taxon>
        <taxon>Thermotogota</taxon>
        <taxon>Thermotogae</taxon>
        <taxon>Thermotogales</taxon>
        <taxon>Thermotogaceae</taxon>
        <taxon>Thermotoga</taxon>
    </lineage>
</organism>